<proteinExistence type="inferred from homology"/>
<accession>Q8Z197</accession>
<gene>
    <name evidence="1" type="primary">epmA</name>
    <name type="synonym">yjeA</name>
    <name type="ordered locus">STY4704</name>
    <name type="ordered locus">t4396</name>
</gene>
<dbReference type="EC" id="6.3.2.-" evidence="1"/>
<dbReference type="EMBL" id="AL513382">
    <property type="protein sequence ID" value="CAD06824.1"/>
    <property type="molecule type" value="Genomic_DNA"/>
</dbReference>
<dbReference type="EMBL" id="AE014613">
    <property type="protein sequence ID" value="AAO71847.1"/>
    <property type="molecule type" value="Genomic_DNA"/>
</dbReference>
<dbReference type="RefSeq" id="NP_458783.1">
    <property type="nucleotide sequence ID" value="NC_003198.1"/>
</dbReference>
<dbReference type="RefSeq" id="WP_000004789.1">
    <property type="nucleotide sequence ID" value="NZ_WSUR01000012.1"/>
</dbReference>
<dbReference type="SMR" id="Q8Z197"/>
<dbReference type="STRING" id="220341.gene:17588522"/>
<dbReference type="KEGG" id="stt:t4396"/>
<dbReference type="KEGG" id="sty:STY4704"/>
<dbReference type="PATRIC" id="fig|220341.7.peg.4805"/>
<dbReference type="eggNOG" id="COG2269">
    <property type="taxonomic scope" value="Bacteria"/>
</dbReference>
<dbReference type="HOGENOM" id="CLU_008255_1_1_6"/>
<dbReference type="OMA" id="EWYRPGF"/>
<dbReference type="OrthoDB" id="9802326at2"/>
<dbReference type="Proteomes" id="UP000000541">
    <property type="component" value="Chromosome"/>
</dbReference>
<dbReference type="Proteomes" id="UP000002670">
    <property type="component" value="Chromosome"/>
</dbReference>
<dbReference type="GO" id="GO:0005829">
    <property type="term" value="C:cytosol"/>
    <property type="evidence" value="ECO:0007669"/>
    <property type="project" value="TreeGrafter"/>
</dbReference>
<dbReference type="GO" id="GO:0016880">
    <property type="term" value="F:acid-ammonia (or amide) ligase activity"/>
    <property type="evidence" value="ECO:0007669"/>
    <property type="project" value="UniProtKB-UniRule"/>
</dbReference>
<dbReference type="GO" id="GO:0005524">
    <property type="term" value="F:ATP binding"/>
    <property type="evidence" value="ECO:0007669"/>
    <property type="project" value="UniProtKB-UniRule"/>
</dbReference>
<dbReference type="GO" id="GO:0004824">
    <property type="term" value="F:lysine-tRNA ligase activity"/>
    <property type="evidence" value="ECO:0007669"/>
    <property type="project" value="InterPro"/>
</dbReference>
<dbReference type="GO" id="GO:0000049">
    <property type="term" value="F:tRNA binding"/>
    <property type="evidence" value="ECO:0007669"/>
    <property type="project" value="TreeGrafter"/>
</dbReference>
<dbReference type="GO" id="GO:0006430">
    <property type="term" value="P:lysyl-tRNA aminoacylation"/>
    <property type="evidence" value="ECO:0007669"/>
    <property type="project" value="InterPro"/>
</dbReference>
<dbReference type="FunFam" id="3.30.930.10:FF:000017">
    <property type="entry name" value="Elongation factor P--(R)-beta-lysine ligase"/>
    <property type="match status" value="1"/>
</dbReference>
<dbReference type="Gene3D" id="3.30.930.10">
    <property type="entry name" value="Bira Bifunctional Protein, Domain 2"/>
    <property type="match status" value="1"/>
</dbReference>
<dbReference type="HAMAP" id="MF_00174">
    <property type="entry name" value="EF_P_modif_A"/>
    <property type="match status" value="1"/>
</dbReference>
<dbReference type="InterPro" id="IPR004364">
    <property type="entry name" value="Aa-tRNA-synt_II"/>
</dbReference>
<dbReference type="InterPro" id="IPR006195">
    <property type="entry name" value="aa-tRNA-synth_II"/>
</dbReference>
<dbReference type="InterPro" id="IPR045864">
    <property type="entry name" value="aa-tRNA-synth_II/BPL/LPL"/>
</dbReference>
<dbReference type="InterPro" id="IPR004525">
    <property type="entry name" value="EpmA"/>
</dbReference>
<dbReference type="InterPro" id="IPR018149">
    <property type="entry name" value="Lys-tRNA-synth_II_C"/>
</dbReference>
<dbReference type="NCBIfam" id="TIGR00462">
    <property type="entry name" value="genX"/>
    <property type="match status" value="1"/>
</dbReference>
<dbReference type="NCBIfam" id="NF006828">
    <property type="entry name" value="PRK09350.1"/>
    <property type="match status" value="1"/>
</dbReference>
<dbReference type="PANTHER" id="PTHR42918:SF6">
    <property type="entry name" value="ELONGATION FACTOR P--(R)-BETA-LYSINE LIGASE"/>
    <property type="match status" value="1"/>
</dbReference>
<dbReference type="PANTHER" id="PTHR42918">
    <property type="entry name" value="LYSYL-TRNA SYNTHETASE"/>
    <property type="match status" value="1"/>
</dbReference>
<dbReference type="Pfam" id="PF00152">
    <property type="entry name" value="tRNA-synt_2"/>
    <property type="match status" value="1"/>
</dbReference>
<dbReference type="PRINTS" id="PR00982">
    <property type="entry name" value="TRNASYNTHLYS"/>
</dbReference>
<dbReference type="SUPFAM" id="SSF55681">
    <property type="entry name" value="Class II aaRS and biotin synthetases"/>
    <property type="match status" value="1"/>
</dbReference>
<dbReference type="PROSITE" id="PS50862">
    <property type="entry name" value="AA_TRNA_LIGASE_II"/>
    <property type="match status" value="1"/>
</dbReference>
<keyword id="KW-0067">ATP-binding</keyword>
<keyword id="KW-0436">Ligase</keyword>
<keyword id="KW-0547">Nucleotide-binding</keyword>
<comment type="function">
    <text evidence="1">With EpmB is involved in the beta-lysylation step of the post-translational modification of translation elongation factor P (EF-P) on 'Lys-34'. Catalyzes the ATP-dependent activation of (R)-beta-lysine produced by EpmB, forming a lysyl-adenylate, from which the beta-lysyl moiety is then transferred to the epsilon-amino group of EF-P 'Lys-34'.</text>
</comment>
<comment type="catalytic activity">
    <reaction evidence="1">
        <text>D-beta-lysine + L-lysyl-[protein] + ATP = N(6)-((3R)-3,6-diaminohexanoyl)-L-lysyl-[protein] + AMP + diphosphate + H(+)</text>
        <dbReference type="Rhea" id="RHEA:83435"/>
        <dbReference type="Rhea" id="RHEA-COMP:9752"/>
        <dbReference type="Rhea" id="RHEA-COMP:20131"/>
        <dbReference type="ChEBI" id="CHEBI:15378"/>
        <dbReference type="ChEBI" id="CHEBI:29969"/>
        <dbReference type="ChEBI" id="CHEBI:30616"/>
        <dbReference type="ChEBI" id="CHEBI:33019"/>
        <dbReference type="ChEBI" id="CHEBI:84138"/>
        <dbReference type="ChEBI" id="CHEBI:156053"/>
        <dbReference type="ChEBI" id="CHEBI:456215"/>
    </reaction>
    <physiologicalReaction direction="left-to-right" evidence="1">
        <dbReference type="Rhea" id="RHEA:83436"/>
    </physiologicalReaction>
</comment>
<comment type="subunit">
    <text evidence="1">Homodimer.</text>
</comment>
<comment type="similarity">
    <text evidence="1">Belongs to the class-II aminoacyl-tRNA synthetase family. EpmA subfamily.</text>
</comment>
<reference key="1">
    <citation type="journal article" date="2001" name="Nature">
        <title>Complete genome sequence of a multiple drug resistant Salmonella enterica serovar Typhi CT18.</title>
        <authorList>
            <person name="Parkhill J."/>
            <person name="Dougan G."/>
            <person name="James K.D."/>
            <person name="Thomson N.R."/>
            <person name="Pickard D."/>
            <person name="Wain J."/>
            <person name="Churcher C.M."/>
            <person name="Mungall K.L."/>
            <person name="Bentley S.D."/>
            <person name="Holden M.T.G."/>
            <person name="Sebaihia M."/>
            <person name="Baker S."/>
            <person name="Basham D."/>
            <person name="Brooks K."/>
            <person name="Chillingworth T."/>
            <person name="Connerton P."/>
            <person name="Cronin A."/>
            <person name="Davis P."/>
            <person name="Davies R.M."/>
            <person name="Dowd L."/>
            <person name="White N."/>
            <person name="Farrar J."/>
            <person name="Feltwell T."/>
            <person name="Hamlin N."/>
            <person name="Haque A."/>
            <person name="Hien T.T."/>
            <person name="Holroyd S."/>
            <person name="Jagels K."/>
            <person name="Krogh A."/>
            <person name="Larsen T.S."/>
            <person name="Leather S."/>
            <person name="Moule S."/>
            <person name="O'Gaora P."/>
            <person name="Parry C."/>
            <person name="Quail M.A."/>
            <person name="Rutherford K.M."/>
            <person name="Simmonds M."/>
            <person name="Skelton J."/>
            <person name="Stevens K."/>
            <person name="Whitehead S."/>
            <person name="Barrell B.G."/>
        </authorList>
    </citation>
    <scope>NUCLEOTIDE SEQUENCE [LARGE SCALE GENOMIC DNA]</scope>
    <source>
        <strain>CT18</strain>
    </source>
</reference>
<reference key="2">
    <citation type="journal article" date="2003" name="J. Bacteriol.">
        <title>Comparative genomics of Salmonella enterica serovar Typhi strains Ty2 and CT18.</title>
        <authorList>
            <person name="Deng W."/>
            <person name="Liou S.-R."/>
            <person name="Plunkett G. III"/>
            <person name="Mayhew G.F."/>
            <person name="Rose D.J."/>
            <person name="Burland V."/>
            <person name="Kodoyianni V."/>
            <person name="Schwartz D.C."/>
            <person name="Blattner F.R."/>
        </authorList>
    </citation>
    <scope>NUCLEOTIDE SEQUENCE [LARGE SCALE GENOMIC DNA]</scope>
    <source>
        <strain>ATCC 700931 / Ty2</strain>
    </source>
</reference>
<evidence type="ECO:0000255" key="1">
    <source>
        <dbReference type="HAMAP-Rule" id="MF_00174"/>
    </source>
</evidence>
<sequence>MSETATWQPSASIPNLLKRAAIMAEIRRFFADRGVLEVETPCMSQATVTDIHLFPFETRFVGPGHSQGINLYLMTSPEYHMKRLLAAGCGPVFQLCRSFRNEEMGRHHNPEFTMLEWYRPHYDMYRLMNEVDDLLQQVLDCQPAESLSYQQAFLRHLEIDPLSADKTQLREAAAKLDLSNIADTEEDRDTLLQLLFTMGVEPHIGKEKPTFIYHFPASQASLAQISTEDHRVAERFEVYYKGIELANGFHELTDAREQQQRFEQDNRKRAARGLPQQPIDQNLLDALAAGLPDCSGVALGVDRLVMLALGAESLADVIAFTVDRA</sequence>
<protein>
    <recommendedName>
        <fullName evidence="1">Elongation factor P--(R)-beta-lysine ligase</fullName>
        <shortName evidence="1">EF-P--(R)-beta-lysine ligase</shortName>
        <ecNumber evidence="1">6.3.2.-</ecNumber>
    </recommendedName>
    <alternativeName>
        <fullName evidence="1">EF-P post-translational modification enzyme A</fullName>
    </alternativeName>
    <alternativeName>
        <fullName evidence="1">EF-P-lysine lysyltransferase</fullName>
    </alternativeName>
</protein>
<feature type="chain" id="PRO_0000152727" description="Elongation factor P--(R)-beta-lysine ligase">
    <location>
        <begin position="1"/>
        <end position="325"/>
    </location>
</feature>
<feature type="binding site" evidence="1">
    <location>
        <begin position="76"/>
        <end position="78"/>
    </location>
    <ligand>
        <name>substrate</name>
    </ligand>
</feature>
<feature type="binding site" evidence="1">
    <location>
        <begin position="100"/>
        <end position="102"/>
    </location>
    <ligand>
        <name>ATP</name>
        <dbReference type="ChEBI" id="CHEBI:30616"/>
    </ligand>
</feature>
<feature type="binding site" evidence="1">
    <location>
        <position position="109"/>
    </location>
    <ligand>
        <name>ATP</name>
        <dbReference type="ChEBI" id="CHEBI:30616"/>
    </ligand>
</feature>
<feature type="binding site" evidence="1">
    <location>
        <position position="118"/>
    </location>
    <ligand>
        <name>substrate</name>
    </ligand>
</feature>
<feature type="binding site" evidence="1">
    <location>
        <begin position="244"/>
        <end position="245"/>
    </location>
    <ligand>
        <name>ATP</name>
        <dbReference type="ChEBI" id="CHEBI:30616"/>
    </ligand>
</feature>
<feature type="binding site" evidence="1">
    <location>
        <position position="251"/>
    </location>
    <ligand>
        <name>substrate</name>
    </ligand>
</feature>
<feature type="binding site" evidence="1">
    <location>
        <position position="300"/>
    </location>
    <ligand>
        <name>ATP</name>
        <dbReference type="ChEBI" id="CHEBI:30616"/>
    </ligand>
</feature>
<name>EPMA_SALTI</name>
<organism>
    <name type="scientific">Salmonella typhi</name>
    <dbReference type="NCBI Taxonomy" id="90370"/>
    <lineage>
        <taxon>Bacteria</taxon>
        <taxon>Pseudomonadati</taxon>
        <taxon>Pseudomonadota</taxon>
        <taxon>Gammaproteobacteria</taxon>
        <taxon>Enterobacterales</taxon>
        <taxon>Enterobacteriaceae</taxon>
        <taxon>Salmonella</taxon>
    </lineage>
</organism>